<protein>
    <recommendedName>
        <fullName evidence="1">4-hydroxy-3-methylbut-2-enyl diphosphate reductase</fullName>
        <shortName evidence="1">HMBPP reductase</shortName>
        <ecNumber evidence="1">1.17.7.4</ecNumber>
    </recommendedName>
</protein>
<dbReference type="EC" id="1.17.7.4" evidence="1"/>
<dbReference type="EMBL" id="BX294149">
    <property type="protein sequence ID" value="CAD76178.1"/>
    <property type="molecule type" value="Genomic_DNA"/>
</dbReference>
<dbReference type="RefSeq" id="NP_868801.1">
    <property type="nucleotide sequence ID" value="NC_005027.1"/>
</dbReference>
<dbReference type="SMR" id="Q7ULU1"/>
<dbReference type="FunCoup" id="Q7ULU1">
    <property type="interactions" value="416"/>
</dbReference>
<dbReference type="STRING" id="243090.RB9288"/>
<dbReference type="EnsemblBacteria" id="CAD76178">
    <property type="protein sequence ID" value="CAD76178"/>
    <property type="gene ID" value="RB9288"/>
</dbReference>
<dbReference type="KEGG" id="rba:RB9288"/>
<dbReference type="PATRIC" id="fig|243090.15.peg.4449"/>
<dbReference type="eggNOG" id="COG0761">
    <property type="taxonomic scope" value="Bacteria"/>
</dbReference>
<dbReference type="HOGENOM" id="CLU_027486_1_1_0"/>
<dbReference type="InParanoid" id="Q7ULU1"/>
<dbReference type="OrthoDB" id="9777362at2"/>
<dbReference type="UniPathway" id="UPA00056">
    <property type="reaction ID" value="UER00097"/>
</dbReference>
<dbReference type="UniPathway" id="UPA00059">
    <property type="reaction ID" value="UER00105"/>
</dbReference>
<dbReference type="Proteomes" id="UP000001025">
    <property type="component" value="Chromosome"/>
</dbReference>
<dbReference type="GO" id="GO:0005829">
    <property type="term" value="C:cytosol"/>
    <property type="evidence" value="ECO:0000318"/>
    <property type="project" value="GO_Central"/>
</dbReference>
<dbReference type="GO" id="GO:0051539">
    <property type="term" value="F:4 iron, 4 sulfur cluster binding"/>
    <property type="evidence" value="ECO:0007669"/>
    <property type="project" value="UniProtKB-UniRule"/>
</dbReference>
<dbReference type="GO" id="GO:0051745">
    <property type="term" value="F:4-hydroxy-3-methylbut-2-enyl diphosphate reductase activity"/>
    <property type="evidence" value="ECO:0000318"/>
    <property type="project" value="GO_Central"/>
</dbReference>
<dbReference type="GO" id="GO:0046872">
    <property type="term" value="F:metal ion binding"/>
    <property type="evidence" value="ECO:0007669"/>
    <property type="project" value="UniProtKB-KW"/>
</dbReference>
<dbReference type="GO" id="GO:0050992">
    <property type="term" value="P:dimethylallyl diphosphate biosynthetic process"/>
    <property type="evidence" value="ECO:0007669"/>
    <property type="project" value="UniProtKB-UniRule"/>
</dbReference>
<dbReference type="GO" id="GO:0019288">
    <property type="term" value="P:isopentenyl diphosphate biosynthetic process, methylerythritol 4-phosphate pathway"/>
    <property type="evidence" value="ECO:0000318"/>
    <property type="project" value="GO_Central"/>
</dbReference>
<dbReference type="GO" id="GO:0016114">
    <property type="term" value="P:terpenoid biosynthetic process"/>
    <property type="evidence" value="ECO:0007669"/>
    <property type="project" value="UniProtKB-UniRule"/>
</dbReference>
<dbReference type="CDD" id="cd13944">
    <property type="entry name" value="lytB_ispH"/>
    <property type="match status" value="1"/>
</dbReference>
<dbReference type="Gene3D" id="3.40.50.11270">
    <property type="match status" value="1"/>
</dbReference>
<dbReference type="Gene3D" id="3.40.1010.20">
    <property type="entry name" value="4-hydroxy-3-methylbut-2-enyl diphosphate reductase, catalytic domain"/>
    <property type="match status" value="2"/>
</dbReference>
<dbReference type="HAMAP" id="MF_00191">
    <property type="entry name" value="IspH"/>
    <property type="match status" value="1"/>
</dbReference>
<dbReference type="InterPro" id="IPR003451">
    <property type="entry name" value="LytB/IspH"/>
</dbReference>
<dbReference type="NCBIfam" id="TIGR00216">
    <property type="entry name" value="ispH_lytB"/>
    <property type="match status" value="1"/>
</dbReference>
<dbReference type="NCBIfam" id="NF002190">
    <property type="entry name" value="PRK01045.1-4"/>
    <property type="match status" value="1"/>
</dbReference>
<dbReference type="PANTHER" id="PTHR30426">
    <property type="entry name" value="4-HYDROXY-3-METHYLBUT-2-ENYL DIPHOSPHATE REDUCTASE"/>
    <property type="match status" value="1"/>
</dbReference>
<dbReference type="PANTHER" id="PTHR30426:SF0">
    <property type="entry name" value="4-HYDROXY-3-METHYLBUT-2-ENYL DIPHOSPHATE REDUCTASE"/>
    <property type="match status" value="1"/>
</dbReference>
<dbReference type="Pfam" id="PF02401">
    <property type="entry name" value="LYTB"/>
    <property type="match status" value="1"/>
</dbReference>
<accession>Q7ULU1</accession>
<proteinExistence type="inferred from homology"/>
<organism>
    <name type="scientific">Rhodopirellula baltica (strain DSM 10527 / NCIMB 13988 / SH1)</name>
    <dbReference type="NCBI Taxonomy" id="243090"/>
    <lineage>
        <taxon>Bacteria</taxon>
        <taxon>Pseudomonadati</taxon>
        <taxon>Planctomycetota</taxon>
        <taxon>Planctomycetia</taxon>
        <taxon>Pirellulales</taxon>
        <taxon>Pirellulaceae</taxon>
        <taxon>Rhodopirellula</taxon>
    </lineage>
</organism>
<keyword id="KW-0004">4Fe-4S</keyword>
<keyword id="KW-0408">Iron</keyword>
<keyword id="KW-0411">Iron-sulfur</keyword>
<keyword id="KW-0414">Isoprene biosynthesis</keyword>
<keyword id="KW-0479">Metal-binding</keyword>
<keyword id="KW-0560">Oxidoreductase</keyword>
<keyword id="KW-1185">Reference proteome</keyword>
<comment type="function">
    <text evidence="1">Catalyzes the conversion of 1-hydroxy-2-methyl-2-(E)-butenyl 4-diphosphate (HMBPP) into a mixture of isopentenyl diphosphate (IPP) and dimethylallyl diphosphate (DMAPP). Acts in the terminal step of the DOXP/MEP pathway for isoprenoid precursor biosynthesis.</text>
</comment>
<comment type="catalytic activity">
    <reaction evidence="1">
        <text>isopentenyl diphosphate + 2 oxidized [2Fe-2S]-[ferredoxin] + H2O = (2E)-4-hydroxy-3-methylbut-2-enyl diphosphate + 2 reduced [2Fe-2S]-[ferredoxin] + 2 H(+)</text>
        <dbReference type="Rhea" id="RHEA:24488"/>
        <dbReference type="Rhea" id="RHEA-COMP:10000"/>
        <dbReference type="Rhea" id="RHEA-COMP:10001"/>
        <dbReference type="ChEBI" id="CHEBI:15377"/>
        <dbReference type="ChEBI" id="CHEBI:15378"/>
        <dbReference type="ChEBI" id="CHEBI:33737"/>
        <dbReference type="ChEBI" id="CHEBI:33738"/>
        <dbReference type="ChEBI" id="CHEBI:128753"/>
        <dbReference type="ChEBI" id="CHEBI:128769"/>
        <dbReference type="EC" id="1.17.7.4"/>
    </reaction>
</comment>
<comment type="catalytic activity">
    <reaction evidence="1">
        <text>dimethylallyl diphosphate + 2 oxidized [2Fe-2S]-[ferredoxin] + H2O = (2E)-4-hydroxy-3-methylbut-2-enyl diphosphate + 2 reduced [2Fe-2S]-[ferredoxin] + 2 H(+)</text>
        <dbReference type="Rhea" id="RHEA:24825"/>
        <dbReference type="Rhea" id="RHEA-COMP:10000"/>
        <dbReference type="Rhea" id="RHEA-COMP:10001"/>
        <dbReference type="ChEBI" id="CHEBI:15377"/>
        <dbReference type="ChEBI" id="CHEBI:15378"/>
        <dbReference type="ChEBI" id="CHEBI:33737"/>
        <dbReference type="ChEBI" id="CHEBI:33738"/>
        <dbReference type="ChEBI" id="CHEBI:57623"/>
        <dbReference type="ChEBI" id="CHEBI:128753"/>
        <dbReference type="EC" id="1.17.7.4"/>
    </reaction>
</comment>
<comment type="cofactor">
    <cofactor evidence="1">
        <name>[4Fe-4S] cluster</name>
        <dbReference type="ChEBI" id="CHEBI:49883"/>
    </cofactor>
    <text evidence="1">Binds 1 [4Fe-4S] cluster per subunit.</text>
</comment>
<comment type="pathway">
    <text evidence="1">Isoprenoid biosynthesis; dimethylallyl diphosphate biosynthesis; dimethylallyl diphosphate from (2E)-4-hydroxy-3-methylbutenyl diphosphate: step 1/1.</text>
</comment>
<comment type="pathway">
    <text evidence="1">Isoprenoid biosynthesis; isopentenyl diphosphate biosynthesis via DXP pathway; isopentenyl diphosphate from 1-deoxy-D-xylulose 5-phosphate: step 6/6.</text>
</comment>
<comment type="similarity">
    <text evidence="1">Belongs to the IspH family.</text>
</comment>
<sequence>MTPMKIILAAPRGFCAGVNMAIDSLDLTLQKFGPPVYVYHEIVHNQFVVKTFREKGAVFVDTIDEVPEGGVLLFSAHGVSPEIRKAAQARKLHALDATCPLVTKVHLEAIKYAKAGYTIILIGHEGHDEVLGTMGEAPEAIVLVEDEADVDRLEFEPGTQLAYLTQTTLSVDDAGRVIRRLRERFPEIHSPPKDDICYATQNRQEAVKLLREDADVIVVLGSQNSSNSQRLKELAAEQGKRAMLVDGPQDLAVDQFSDDDRVLITAGASAPESVVQSTIDWLKENFDASVDTQVVREEDVQFPLPKPLRAFAAEQAAAK</sequence>
<evidence type="ECO:0000255" key="1">
    <source>
        <dbReference type="HAMAP-Rule" id="MF_00191"/>
    </source>
</evidence>
<gene>
    <name evidence="1" type="primary">ispH</name>
    <name type="synonym">lytB</name>
    <name type="ordered locus">RB9288</name>
</gene>
<feature type="chain" id="PRO_0000128864" description="4-hydroxy-3-methylbut-2-enyl diphosphate reductase">
    <location>
        <begin position="1"/>
        <end position="319"/>
    </location>
</feature>
<feature type="active site" description="Proton donor" evidence="1">
    <location>
        <position position="129"/>
    </location>
</feature>
<feature type="binding site" evidence="1">
    <location>
        <position position="15"/>
    </location>
    <ligand>
        <name>[4Fe-4S] cluster</name>
        <dbReference type="ChEBI" id="CHEBI:49883"/>
    </ligand>
</feature>
<feature type="binding site" evidence="1">
    <location>
        <position position="44"/>
    </location>
    <ligand>
        <name>(2E)-4-hydroxy-3-methylbut-2-enyl diphosphate</name>
        <dbReference type="ChEBI" id="CHEBI:128753"/>
    </ligand>
</feature>
<feature type="binding site" evidence="1">
    <location>
        <position position="44"/>
    </location>
    <ligand>
        <name>dimethylallyl diphosphate</name>
        <dbReference type="ChEBI" id="CHEBI:57623"/>
    </ligand>
</feature>
<feature type="binding site" evidence="1">
    <location>
        <position position="44"/>
    </location>
    <ligand>
        <name>isopentenyl diphosphate</name>
        <dbReference type="ChEBI" id="CHEBI:128769"/>
    </ligand>
</feature>
<feature type="binding site" evidence="1">
    <location>
        <position position="77"/>
    </location>
    <ligand>
        <name>(2E)-4-hydroxy-3-methylbut-2-enyl diphosphate</name>
        <dbReference type="ChEBI" id="CHEBI:128753"/>
    </ligand>
</feature>
<feature type="binding site" evidence="1">
    <location>
        <position position="77"/>
    </location>
    <ligand>
        <name>dimethylallyl diphosphate</name>
        <dbReference type="ChEBI" id="CHEBI:57623"/>
    </ligand>
</feature>
<feature type="binding site" evidence="1">
    <location>
        <position position="77"/>
    </location>
    <ligand>
        <name>isopentenyl diphosphate</name>
        <dbReference type="ChEBI" id="CHEBI:128769"/>
    </ligand>
</feature>
<feature type="binding site" evidence="1">
    <location>
        <position position="99"/>
    </location>
    <ligand>
        <name>[4Fe-4S] cluster</name>
        <dbReference type="ChEBI" id="CHEBI:49883"/>
    </ligand>
</feature>
<feature type="binding site" evidence="1">
    <location>
        <position position="127"/>
    </location>
    <ligand>
        <name>(2E)-4-hydroxy-3-methylbut-2-enyl diphosphate</name>
        <dbReference type="ChEBI" id="CHEBI:128753"/>
    </ligand>
</feature>
<feature type="binding site" evidence="1">
    <location>
        <position position="127"/>
    </location>
    <ligand>
        <name>dimethylallyl diphosphate</name>
        <dbReference type="ChEBI" id="CHEBI:57623"/>
    </ligand>
</feature>
<feature type="binding site" evidence="1">
    <location>
        <position position="127"/>
    </location>
    <ligand>
        <name>isopentenyl diphosphate</name>
        <dbReference type="ChEBI" id="CHEBI:128769"/>
    </ligand>
</feature>
<feature type="binding site" evidence="1">
    <location>
        <position position="167"/>
    </location>
    <ligand>
        <name>(2E)-4-hydroxy-3-methylbut-2-enyl diphosphate</name>
        <dbReference type="ChEBI" id="CHEBI:128753"/>
    </ligand>
</feature>
<feature type="binding site" evidence="1">
    <location>
        <position position="197"/>
    </location>
    <ligand>
        <name>[4Fe-4S] cluster</name>
        <dbReference type="ChEBI" id="CHEBI:49883"/>
    </ligand>
</feature>
<feature type="binding site" evidence="1">
    <location>
        <position position="225"/>
    </location>
    <ligand>
        <name>(2E)-4-hydroxy-3-methylbut-2-enyl diphosphate</name>
        <dbReference type="ChEBI" id="CHEBI:128753"/>
    </ligand>
</feature>
<feature type="binding site" evidence="1">
    <location>
        <position position="225"/>
    </location>
    <ligand>
        <name>dimethylallyl diphosphate</name>
        <dbReference type="ChEBI" id="CHEBI:57623"/>
    </ligand>
</feature>
<feature type="binding site" evidence="1">
    <location>
        <position position="225"/>
    </location>
    <ligand>
        <name>isopentenyl diphosphate</name>
        <dbReference type="ChEBI" id="CHEBI:128769"/>
    </ligand>
</feature>
<feature type="binding site" evidence="1">
    <location>
        <position position="226"/>
    </location>
    <ligand>
        <name>(2E)-4-hydroxy-3-methylbut-2-enyl diphosphate</name>
        <dbReference type="ChEBI" id="CHEBI:128753"/>
    </ligand>
</feature>
<feature type="binding site" evidence="1">
    <location>
        <position position="226"/>
    </location>
    <ligand>
        <name>dimethylallyl diphosphate</name>
        <dbReference type="ChEBI" id="CHEBI:57623"/>
    </ligand>
</feature>
<feature type="binding site" evidence="1">
    <location>
        <position position="226"/>
    </location>
    <ligand>
        <name>isopentenyl diphosphate</name>
        <dbReference type="ChEBI" id="CHEBI:128769"/>
    </ligand>
</feature>
<feature type="binding site" evidence="1">
    <location>
        <position position="227"/>
    </location>
    <ligand>
        <name>(2E)-4-hydroxy-3-methylbut-2-enyl diphosphate</name>
        <dbReference type="ChEBI" id="CHEBI:128753"/>
    </ligand>
</feature>
<feature type="binding site" evidence="1">
    <location>
        <position position="227"/>
    </location>
    <ligand>
        <name>dimethylallyl diphosphate</name>
        <dbReference type="ChEBI" id="CHEBI:57623"/>
    </ligand>
</feature>
<feature type="binding site" evidence="1">
    <location>
        <position position="227"/>
    </location>
    <ligand>
        <name>isopentenyl diphosphate</name>
        <dbReference type="ChEBI" id="CHEBI:128769"/>
    </ligand>
</feature>
<feature type="binding site" evidence="1">
    <location>
        <position position="269"/>
    </location>
    <ligand>
        <name>(2E)-4-hydroxy-3-methylbut-2-enyl diphosphate</name>
        <dbReference type="ChEBI" id="CHEBI:128753"/>
    </ligand>
</feature>
<feature type="binding site" evidence="1">
    <location>
        <position position="269"/>
    </location>
    <ligand>
        <name>dimethylallyl diphosphate</name>
        <dbReference type="ChEBI" id="CHEBI:57623"/>
    </ligand>
</feature>
<feature type="binding site" evidence="1">
    <location>
        <position position="269"/>
    </location>
    <ligand>
        <name>isopentenyl diphosphate</name>
        <dbReference type="ChEBI" id="CHEBI:128769"/>
    </ligand>
</feature>
<name>ISPH_RHOBA</name>
<reference key="1">
    <citation type="journal article" date="2003" name="Proc. Natl. Acad. Sci. U.S.A.">
        <title>Complete genome sequence of the marine planctomycete Pirellula sp. strain 1.</title>
        <authorList>
            <person name="Gloeckner F.O."/>
            <person name="Kube M."/>
            <person name="Bauer M."/>
            <person name="Teeling H."/>
            <person name="Lombardot T."/>
            <person name="Ludwig W."/>
            <person name="Gade D."/>
            <person name="Beck A."/>
            <person name="Borzym K."/>
            <person name="Heitmann K."/>
            <person name="Rabus R."/>
            <person name="Schlesner H."/>
            <person name="Amann R."/>
            <person name="Reinhardt R."/>
        </authorList>
    </citation>
    <scope>NUCLEOTIDE SEQUENCE [LARGE SCALE GENOMIC DNA]</scope>
    <source>
        <strain>DSM 10527 / NCIMB 13988 / SH1</strain>
    </source>
</reference>